<feature type="chain" id="PRO_0000351782" description="Ribosome maturation factor RimM">
    <location>
        <begin position="1"/>
        <end position="173"/>
    </location>
</feature>
<feature type="domain" description="PRC barrel" evidence="1">
    <location>
        <begin position="98"/>
        <end position="170"/>
    </location>
</feature>
<keyword id="KW-0143">Chaperone</keyword>
<keyword id="KW-0963">Cytoplasm</keyword>
<keyword id="KW-1185">Reference proteome</keyword>
<keyword id="KW-0690">Ribosome biogenesis</keyword>
<keyword id="KW-0698">rRNA processing</keyword>
<gene>
    <name evidence="1" type="primary">rimM</name>
    <name type="ordered locus">Ppro_1096</name>
</gene>
<name>RIMM_PELPD</name>
<dbReference type="EMBL" id="CP000482">
    <property type="protein sequence ID" value="ABK98721.1"/>
    <property type="status" value="ALT_INIT"/>
    <property type="molecule type" value="Genomic_DNA"/>
</dbReference>
<dbReference type="RefSeq" id="WP_041532150.1">
    <property type="nucleotide sequence ID" value="NC_008609.1"/>
</dbReference>
<dbReference type="SMR" id="A1AN01"/>
<dbReference type="STRING" id="338966.Ppro_1096"/>
<dbReference type="KEGG" id="ppd:Ppro_1096"/>
<dbReference type="eggNOG" id="COG0806">
    <property type="taxonomic scope" value="Bacteria"/>
</dbReference>
<dbReference type="HOGENOM" id="CLU_077636_1_0_7"/>
<dbReference type="Proteomes" id="UP000006732">
    <property type="component" value="Chromosome"/>
</dbReference>
<dbReference type="GO" id="GO:0005737">
    <property type="term" value="C:cytoplasm"/>
    <property type="evidence" value="ECO:0007669"/>
    <property type="project" value="UniProtKB-SubCell"/>
</dbReference>
<dbReference type="GO" id="GO:0005840">
    <property type="term" value="C:ribosome"/>
    <property type="evidence" value="ECO:0007669"/>
    <property type="project" value="InterPro"/>
</dbReference>
<dbReference type="GO" id="GO:0043022">
    <property type="term" value="F:ribosome binding"/>
    <property type="evidence" value="ECO:0007669"/>
    <property type="project" value="InterPro"/>
</dbReference>
<dbReference type="GO" id="GO:0042274">
    <property type="term" value="P:ribosomal small subunit biogenesis"/>
    <property type="evidence" value="ECO:0007669"/>
    <property type="project" value="UniProtKB-UniRule"/>
</dbReference>
<dbReference type="GO" id="GO:0006364">
    <property type="term" value="P:rRNA processing"/>
    <property type="evidence" value="ECO:0007669"/>
    <property type="project" value="UniProtKB-UniRule"/>
</dbReference>
<dbReference type="Gene3D" id="2.30.30.240">
    <property type="entry name" value="PRC-barrel domain"/>
    <property type="match status" value="1"/>
</dbReference>
<dbReference type="Gene3D" id="2.40.30.60">
    <property type="entry name" value="RimM"/>
    <property type="match status" value="1"/>
</dbReference>
<dbReference type="HAMAP" id="MF_00014">
    <property type="entry name" value="Ribosome_mat_RimM"/>
    <property type="match status" value="1"/>
</dbReference>
<dbReference type="InterPro" id="IPR011033">
    <property type="entry name" value="PRC_barrel-like_sf"/>
</dbReference>
<dbReference type="InterPro" id="IPR056792">
    <property type="entry name" value="PRC_RimM"/>
</dbReference>
<dbReference type="InterPro" id="IPR011961">
    <property type="entry name" value="RimM"/>
</dbReference>
<dbReference type="InterPro" id="IPR002676">
    <property type="entry name" value="RimM_N"/>
</dbReference>
<dbReference type="InterPro" id="IPR036976">
    <property type="entry name" value="RimM_N_sf"/>
</dbReference>
<dbReference type="InterPro" id="IPR009000">
    <property type="entry name" value="Transl_B-barrel_sf"/>
</dbReference>
<dbReference type="NCBIfam" id="TIGR02273">
    <property type="entry name" value="16S_RimM"/>
    <property type="match status" value="1"/>
</dbReference>
<dbReference type="PANTHER" id="PTHR33692">
    <property type="entry name" value="RIBOSOME MATURATION FACTOR RIMM"/>
    <property type="match status" value="1"/>
</dbReference>
<dbReference type="PANTHER" id="PTHR33692:SF1">
    <property type="entry name" value="RIBOSOME MATURATION FACTOR RIMM"/>
    <property type="match status" value="1"/>
</dbReference>
<dbReference type="Pfam" id="PF24986">
    <property type="entry name" value="PRC_RimM"/>
    <property type="match status" value="1"/>
</dbReference>
<dbReference type="Pfam" id="PF01782">
    <property type="entry name" value="RimM"/>
    <property type="match status" value="1"/>
</dbReference>
<dbReference type="SUPFAM" id="SSF50346">
    <property type="entry name" value="PRC-barrel domain"/>
    <property type="match status" value="1"/>
</dbReference>
<dbReference type="SUPFAM" id="SSF50447">
    <property type="entry name" value="Translation proteins"/>
    <property type="match status" value="1"/>
</dbReference>
<reference key="1">
    <citation type="submission" date="2006-10" db="EMBL/GenBank/DDBJ databases">
        <title>Complete sequence of chromosome of Pelobacter propionicus DSM 2379.</title>
        <authorList>
            <consortium name="US DOE Joint Genome Institute"/>
            <person name="Copeland A."/>
            <person name="Lucas S."/>
            <person name="Lapidus A."/>
            <person name="Barry K."/>
            <person name="Detter J.C."/>
            <person name="Glavina del Rio T."/>
            <person name="Hammon N."/>
            <person name="Israni S."/>
            <person name="Dalin E."/>
            <person name="Tice H."/>
            <person name="Pitluck S."/>
            <person name="Saunders E."/>
            <person name="Brettin T."/>
            <person name="Bruce D."/>
            <person name="Han C."/>
            <person name="Tapia R."/>
            <person name="Schmutz J."/>
            <person name="Larimer F."/>
            <person name="Land M."/>
            <person name="Hauser L."/>
            <person name="Kyrpides N."/>
            <person name="Kim E."/>
            <person name="Lovley D."/>
            <person name="Richardson P."/>
        </authorList>
    </citation>
    <scope>NUCLEOTIDE SEQUENCE [LARGE SCALE GENOMIC DNA]</scope>
    <source>
        <strain>DSM 2379 / NBRC 103807 / OttBd1</strain>
    </source>
</reference>
<comment type="function">
    <text evidence="1">An accessory protein needed during the final step in the assembly of 30S ribosomal subunit, possibly for assembly of the head region. Essential for efficient processing of 16S rRNA. May be needed both before and after RbfA during the maturation of 16S rRNA. It has affinity for free ribosomal 30S subunits but not for 70S ribosomes.</text>
</comment>
<comment type="subunit">
    <text evidence="1">Binds ribosomal protein uS19.</text>
</comment>
<comment type="subcellular location">
    <subcellularLocation>
        <location evidence="1">Cytoplasm</location>
    </subcellularLocation>
</comment>
<comment type="domain">
    <text evidence="1">The PRC barrel domain binds ribosomal protein uS19.</text>
</comment>
<comment type="similarity">
    <text evidence="1">Belongs to the RimM family.</text>
</comment>
<comment type="sequence caution" evidence="2">
    <conflict type="erroneous initiation">
        <sequence resource="EMBL-CDS" id="ABK98721"/>
    </conflict>
</comment>
<organism>
    <name type="scientific">Pelobacter propionicus (strain DSM 2379 / NBRC 103807 / OttBd1)</name>
    <dbReference type="NCBI Taxonomy" id="338966"/>
    <lineage>
        <taxon>Bacteria</taxon>
        <taxon>Pseudomonadati</taxon>
        <taxon>Thermodesulfobacteriota</taxon>
        <taxon>Desulfuromonadia</taxon>
        <taxon>Desulfuromonadales</taxon>
        <taxon>Desulfuromonadaceae</taxon>
        <taxon>Pelobacter</taxon>
    </lineage>
</organism>
<accession>A1AN01</accession>
<sequence length="173" mass="18982">MIDSESLIPVGKLVATHGIRGMLKLHSYSGSVESLCTCDSVILRSRDGALNRFEPKPVLPRPGKFLIGFKGVDHIDQAQTLVGSEICLRRDQLPEPEEDEYYWCDLIGLEVATVEGMALGVLEEIFKAGSSDIYVVRGAGREYLIPAIADVIHSVDLEMGRMLITPLEGLLDL</sequence>
<protein>
    <recommendedName>
        <fullName evidence="1">Ribosome maturation factor RimM</fullName>
    </recommendedName>
</protein>
<proteinExistence type="inferred from homology"/>
<evidence type="ECO:0000255" key="1">
    <source>
        <dbReference type="HAMAP-Rule" id="MF_00014"/>
    </source>
</evidence>
<evidence type="ECO:0000305" key="2"/>